<organism>
    <name type="scientific">Homo sapiens</name>
    <name type="common">Human</name>
    <dbReference type="NCBI Taxonomy" id="9606"/>
    <lineage>
        <taxon>Eukaryota</taxon>
        <taxon>Metazoa</taxon>
        <taxon>Chordata</taxon>
        <taxon>Craniata</taxon>
        <taxon>Vertebrata</taxon>
        <taxon>Euteleostomi</taxon>
        <taxon>Mammalia</taxon>
        <taxon>Eutheria</taxon>
        <taxon>Euarchontoglires</taxon>
        <taxon>Primates</taxon>
        <taxon>Haplorrhini</taxon>
        <taxon>Catarrhini</taxon>
        <taxon>Hominidae</taxon>
        <taxon>Homo</taxon>
    </lineage>
</organism>
<protein>
    <recommendedName>
        <fullName>Ras-related protein Rab-3A</fullName>
        <ecNumber evidence="10">3.6.5.2</ecNumber>
    </recommendedName>
</protein>
<feature type="chain" id="PRO_0000121076" description="Ras-related protein Rab-3A">
    <location>
        <begin position="1"/>
        <end position="220"/>
    </location>
</feature>
<feature type="region of interest" description="Disordered" evidence="3">
    <location>
        <begin position="194"/>
        <end position="220"/>
    </location>
</feature>
<feature type="short sequence motif" description="Switch 1" evidence="2">
    <location>
        <begin position="49"/>
        <end position="58"/>
    </location>
</feature>
<feature type="short sequence motif" description="Switch 2" evidence="2">
    <location>
        <begin position="80"/>
        <end position="96"/>
    </location>
</feature>
<feature type="binding site" evidence="2">
    <location>
        <position position="31"/>
    </location>
    <ligand>
        <name>GTP</name>
        <dbReference type="ChEBI" id="CHEBI:37565"/>
    </ligand>
</feature>
<feature type="binding site" evidence="2">
    <location>
        <position position="32"/>
    </location>
    <ligand>
        <name>GTP</name>
        <dbReference type="ChEBI" id="CHEBI:37565"/>
    </ligand>
</feature>
<feature type="binding site" evidence="2">
    <location>
        <position position="33"/>
    </location>
    <ligand>
        <name>GTP</name>
        <dbReference type="ChEBI" id="CHEBI:37565"/>
    </ligand>
</feature>
<feature type="binding site" evidence="2">
    <location>
        <position position="34"/>
    </location>
    <ligand>
        <name>GTP</name>
        <dbReference type="ChEBI" id="CHEBI:37565"/>
    </ligand>
</feature>
<feature type="binding site" evidence="2">
    <location>
        <position position="35"/>
    </location>
    <ligand>
        <name>GTP</name>
        <dbReference type="ChEBI" id="CHEBI:37565"/>
    </ligand>
</feature>
<feature type="binding site" evidence="2">
    <location>
        <position position="36"/>
    </location>
    <ligand>
        <name>GTP</name>
        <dbReference type="ChEBI" id="CHEBI:37565"/>
    </ligand>
</feature>
<feature type="binding site" evidence="2">
    <location>
        <position position="36"/>
    </location>
    <ligand>
        <name>Mg(2+)</name>
        <dbReference type="ChEBI" id="CHEBI:18420"/>
    </ligand>
</feature>
<feature type="binding site" evidence="2">
    <location>
        <position position="37"/>
    </location>
    <ligand>
        <name>GTP</name>
        <dbReference type="ChEBI" id="CHEBI:37565"/>
    </ligand>
</feature>
<feature type="binding site" evidence="2">
    <location>
        <position position="48"/>
    </location>
    <ligand>
        <name>GTP</name>
        <dbReference type="ChEBI" id="CHEBI:37565"/>
    </ligand>
</feature>
<feature type="binding site" evidence="2">
    <location>
        <position position="49"/>
    </location>
    <ligand>
        <name>GTP</name>
        <dbReference type="ChEBI" id="CHEBI:37565"/>
    </ligand>
</feature>
<feature type="binding site" evidence="2">
    <location>
        <position position="53"/>
    </location>
    <ligand>
        <name>GTP</name>
        <dbReference type="ChEBI" id="CHEBI:37565"/>
    </ligand>
</feature>
<feature type="binding site" evidence="2">
    <location>
        <position position="54"/>
    </location>
    <ligand>
        <name>GTP</name>
        <dbReference type="ChEBI" id="CHEBI:37565"/>
    </ligand>
</feature>
<feature type="binding site" evidence="2">
    <location>
        <position position="54"/>
    </location>
    <ligand>
        <name>Mg(2+)</name>
        <dbReference type="ChEBI" id="CHEBI:18420"/>
    </ligand>
</feature>
<feature type="binding site" evidence="2">
    <location>
        <position position="77"/>
    </location>
    <ligand>
        <name>Mg(2+)</name>
        <dbReference type="ChEBI" id="CHEBI:18420"/>
    </ligand>
</feature>
<feature type="binding site" evidence="2">
    <location>
        <position position="80"/>
    </location>
    <ligand>
        <name>GTP</name>
        <dbReference type="ChEBI" id="CHEBI:37565"/>
    </ligand>
</feature>
<feature type="binding site" evidence="2">
    <location>
        <position position="135"/>
    </location>
    <ligand>
        <name>GTP</name>
        <dbReference type="ChEBI" id="CHEBI:37565"/>
    </ligand>
</feature>
<feature type="binding site" evidence="2">
    <location>
        <position position="136"/>
    </location>
    <ligand>
        <name>GTP</name>
        <dbReference type="ChEBI" id="CHEBI:37565"/>
    </ligand>
</feature>
<feature type="binding site" evidence="2">
    <location>
        <position position="138"/>
    </location>
    <ligand>
        <name>GTP</name>
        <dbReference type="ChEBI" id="CHEBI:37565"/>
    </ligand>
</feature>
<feature type="binding site" evidence="2">
    <location>
        <position position="166"/>
    </location>
    <ligand>
        <name>GTP</name>
        <dbReference type="ChEBI" id="CHEBI:37565"/>
    </ligand>
</feature>
<feature type="binding site" evidence="2">
    <location>
        <position position="167"/>
    </location>
    <ligand>
        <name>GTP</name>
        <dbReference type="ChEBI" id="CHEBI:37565"/>
    </ligand>
</feature>
<feature type="modified residue" description="Phosphothreonine; by LRRK2" evidence="11 13">
    <location>
        <position position="86"/>
    </location>
</feature>
<feature type="modified residue" description="Phosphoserine" evidence="1">
    <location>
        <position position="188"/>
    </location>
</feature>
<feature type="modified residue" description="Phosphoserine" evidence="1">
    <location>
        <position position="190"/>
    </location>
</feature>
<feature type="modified residue" description="Cysteine methyl ester" evidence="6">
    <location>
        <position position="220"/>
    </location>
</feature>
<feature type="lipid moiety-binding region" description="S-geranylgeranyl cysteine" evidence="6 16">
    <location>
        <position position="218"/>
    </location>
</feature>
<feature type="lipid moiety-binding region" description="S-geranylgeranyl cysteine" evidence="6 16">
    <location>
        <position position="220"/>
    </location>
</feature>
<feature type="mutagenesis site" description="No change in REP15 binding affinity." evidence="15">
    <original>V</original>
    <variation>N</variation>
    <location>
        <position position="61"/>
    </location>
</feature>
<feature type="mutagenesis site" description="Decreased REP15 binding affinity." evidence="15">
    <original>Y</original>
    <variation>F</variation>
    <location>
        <position position="84"/>
    </location>
</feature>
<feature type="mutagenesis site" description="Loss of phosphorylation." evidence="13">
    <original>T</original>
    <variation>A</variation>
    <location>
        <position position="86"/>
    </location>
</feature>
<feature type="mutagenesis site" description="Phosphomimetic mutant. Loss of GDI1, GDI2, CHM and CHML binding." evidence="13">
    <original>T</original>
    <variation>E</variation>
    <location>
        <position position="86"/>
    </location>
</feature>
<feature type="sequence conflict" description="In Ref. 2; AAF67748." evidence="17" ref="2">
    <original>R</original>
    <variation>K</variation>
    <location>
        <position position="70"/>
    </location>
</feature>
<feature type="sequence conflict" description="In Ref. 2; AAF67748." evidence="17" ref="2">
    <original>V</original>
    <variation>E</variation>
    <location>
        <position position="180"/>
    </location>
</feature>
<comment type="function">
    <text evidence="1 2 9 10 12 14">The small GTPases Rab are key regulators of intracellular membrane trafficking, from the formation of transport vesicles to their fusion with membranes (PubMed:2501306). Rabs cycle between an inactive GDP-bound form and an active GTP-bound form that is able to recruit to membranes different sets of downstream effectors directly responsible for vesicle formation, movement, tethering and fusion (PubMed:2501306). RAB3A plays a central role in regulated exocytosis and secretion. Controls the recruitment, tethering and docking of secretory vesicles to the plasma membrane (PubMed:2501306). Upon stimulation, switches to its active GTP-bound form, cycles to vesicles and recruits effectors such as RIMS1, RIMS2, Rabphilin-3A/RPH3A, RPH3AL or SYTL4 to help the docking of vesicules onto the plasma membrane (By similarity). Upon GTP hydrolysis by GTPase-activating protein, dissociates from the vesicle membrane allowing the exocytosis to proceed (By similarity). Stimulates insulin secretion through interaction with RIMS2 or RPH3AL effectors in pancreatic beta cells (By similarity). Regulates calcium-dependent lysosome exocytosis and plasma membrane repair (PMR) via the interaction with 2 effectors, SYTL4 and myosin-9/MYH9 (PubMed:27325790). Acts as a positive regulator of acrosome content secretion in sperm cells by interacting with RIMS1 (PubMed:22248876, PubMed:30599141). Also plays a role in the regulation of dopamine release by interacting with synaptotagmin I/SYT (By similarity).</text>
</comment>
<comment type="catalytic activity">
    <reaction evidence="10">
        <text>GTP + H2O = GDP + phosphate + H(+)</text>
        <dbReference type="Rhea" id="RHEA:19669"/>
        <dbReference type="ChEBI" id="CHEBI:15377"/>
        <dbReference type="ChEBI" id="CHEBI:15378"/>
        <dbReference type="ChEBI" id="CHEBI:37565"/>
        <dbReference type="ChEBI" id="CHEBI:43474"/>
        <dbReference type="ChEBI" id="CHEBI:58189"/>
        <dbReference type="EC" id="3.6.5.2"/>
    </reaction>
    <physiologicalReaction direction="left-to-right" evidence="18">
        <dbReference type="Rhea" id="RHEA:19670"/>
    </physiologicalReaction>
</comment>
<comment type="cofactor">
    <cofactor evidence="2">
        <name>Mg(2+)</name>
        <dbReference type="ChEBI" id="CHEBI:18420"/>
    </cofactor>
</comment>
<comment type="activity regulation">
    <text evidence="4 7 8 17">Regulated by guanine nucleotide exchange factors (GEFs) including RAB3IL1 and MADD which promote the exchange of bound GDP for free GTP (PubMed:20937701). Regulated by GTPase activating proteins (GAPs) including RAB3GAP1 and TBC1D10B which increase the GTP hydrolysis activity (PubMed:10859313, PubMed:19077034). Inhibited by GDP dissociation inhibitors (GDIs) which prevent Rab-GDP dissociation (Probable).</text>
</comment>
<comment type="subunit">
    <text evidence="1 2 5 12 13 15">Interacts with RIMS1 and RIMS2 (By similarity). Interacts with Rabphilin-3A/RPH3A and Rab effector Noc2/RPH3AL (By similarity). Interacts with SYTL4 (By similarity). Interacts with RAB3IP (By similarity). Interacts with SGSM1 and SGSM3 (By similarity). Interacts with SYT1 (By similarity). Interacts with MYH9; this interaction is essential for lysosome exocytosis and plasma membrane repair (PubMed:27325790). Interacts with STXBP1; this interaction promotes RAB3A dissociation from the vesicle membrane (By similarity). Interacts with SNCA (PubMed:15207266). The GTP-bound form interacts with REP15 (PubMed:35871249). Interacts with GDI1, GDI2, CHM and CHML; phosphorylation at Thr-86 disrupts these interactions (PubMed:29125462). Interacts with MADD (via uDENN domain); the GTP-bound form is preferred for interaction (By similarity).</text>
</comment>
<comment type="interaction">
    <interactant intactId="EBI-1045943">
        <id>P20336</id>
    </interactant>
    <interactant intactId="EBI-10171774">
        <id>P60410</id>
        <label>KRTAP10-8</label>
    </interactant>
    <organismsDiffer>false</organismsDiffer>
    <experiments>3</experiments>
</comment>
<comment type="interaction">
    <interactant intactId="EBI-1045943">
        <id>P20336</id>
    </interactant>
    <interactant intactId="EBI-743796">
        <id>Q8TBN0</id>
        <label>RAB3IL1</label>
    </interactant>
    <organismsDiffer>false</organismsDiffer>
    <experiments>3</experiments>
</comment>
<comment type="interaction">
    <interactant intactId="EBI-1045943">
        <id>P20336</id>
    </interactant>
    <interactant intactId="EBI-747844">
        <id>Q96QF0</id>
        <label>RAB3IP</label>
    </interactant>
    <organismsDiffer>false</organismsDiffer>
    <experiments>3</experiments>
</comment>
<comment type="interaction">
    <interactant intactId="EBI-1045943">
        <id>P20336</id>
    </interactant>
    <interactant intactId="EBI-11984839">
        <id>Q96QF0-7</id>
        <label>RAB3IP</label>
    </interactant>
    <organismsDiffer>false</organismsDiffer>
    <experiments>3</experiments>
</comment>
<comment type="interaction">
    <interactant intactId="EBI-1045943">
        <id>P20336</id>
    </interactant>
    <interactant intactId="EBI-713992">
        <id>P47224</id>
        <label>RABIF</label>
    </interactant>
    <organismsDiffer>false</organismsDiffer>
    <experiments>11</experiments>
</comment>
<comment type="interaction">
    <interactant intactId="EBI-1045943">
        <id>P20336</id>
    </interactant>
    <interactant intactId="EBI-12894399">
        <id>Q9H8Y1</id>
        <label>VRTN</label>
    </interactant>
    <organismsDiffer>false</organismsDiffer>
    <experiments>5</experiments>
</comment>
<comment type="subcellular location">
    <subcellularLocation>
        <location evidence="2">Cytoplasm</location>
        <location evidence="2">Cytosol</location>
    </subcellularLocation>
    <subcellularLocation>
        <location evidence="12">Lysosome</location>
    </subcellularLocation>
    <subcellularLocation>
        <location evidence="2">Cytoplasmic vesicle</location>
        <location evidence="2">Secretory vesicle</location>
    </subcellularLocation>
    <subcellularLocation>
        <location evidence="1">Cell projection</location>
        <location evidence="1">Axon</location>
    </subcellularLocation>
    <subcellularLocation>
        <location evidence="17">Cell membrane</location>
        <topology evidence="17">Lipid-anchor</topology>
        <orientation evidence="17">Cytoplasmic side</orientation>
    </subcellularLocation>
    <subcellularLocation>
        <location evidence="1">Presynapse</location>
    </subcellularLocation>
    <subcellularLocation>
        <location evidence="1">Postsynapse</location>
    </subcellularLocation>
    <text evidence="2">Cycles between a vesicle-associated GTP-bound form and a cytosolic GDP-bound form.</text>
</comment>
<comment type="tissue specificity">
    <text>Specifically expressed in brain.</text>
</comment>
<comment type="domain">
    <text evidence="2">Switch 1, switch 2 and the interswitch regions are characteristic of Rab GTPases and mediate the interactions with Rab downstream effectors. The switch regions undergo conformational changes upon nucleotide binding which drives interaction with specific sets of effector proteins, with most effectors only binding to GTP-bound Rab.</text>
</comment>
<comment type="PTM">
    <text evidence="13">Phosphorylation of Thr-86 in the switch II region by LRRK2 prevents the association of RAB regulatory proteins, including CHM, CHML and RAB GDP dissociation inhibitors GDI1 and GDI2.</text>
</comment>
<comment type="similarity">
    <text evidence="17">Belongs to the small GTPase superfamily. Rab family.</text>
</comment>
<keyword id="KW-1003">Cell membrane</keyword>
<keyword id="KW-0966">Cell projection</keyword>
<keyword id="KW-0963">Cytoplasm</keyword>
<keyword id="KW-0968">Cytoplasmic vesicle</keyword>
<keyword id="KW-0268">Exocytosis</keyword>
<keyword id="KW-0342">GTP-binding</keyword>
<keyword id="KW-0378">Hydrolase</keyword>
<keyword id="KW-0449">Lipoprotein</keyword>
<keyword id="KW-0458">Lysosome</keyword>
<keyword id="KW-0460">Magnesium</keyword>
<keyword id="KW-0472">Membrane</keyword>
<keyword id="KW-0479">Metal-binding</keyword>
<keyword id="KW-0488">Methylation</keyword>
<keyword id="KW-0547">Nucleotide-binding</keyword>
<keyword id="KW-0597">Phosphoprotein</keyword>
<keyword id="KW-0636">Prenylation</keyword>
<keyword id="KW-0653">Protein transport</keyword>
<keyword id="KW-1267">Proteomics identification</keyword>
<keyword id="KW-1185">Reference proteome</keyword>
<keyword id="KW-0770">Synapse</keyword>
<keyword id="KW-0813">Transport</keyword>
<sequence>MASATDSRYGQKESSDQNFDYMFKILIIGNSSVGKTSFLFRYADDSFTPAFVSTVGIDFKVKTIYRNDKRIKLQIWDTAGQERYRTITTAYYRGAMGFILMYDITNEESFNAVQDWSTQIKTYSWDNAQVLLVGNKCDMEDERVVSSERGRQLADHLGFEFFEASAKDNINVKQTFERLVDVICEKMSESLDTADPAVTGAKQGPQLSDQQVPPHQDCAC</sequence>
<accession>P20336</accession>
<accession>A8K0J4</accession>
<accession>Q9NYE1</accession>
<name>RAB3A_HUMAN</name>
<dbReference type="EC" id="3.6.5.2" evidence="10"/>
<dbReference type="EMBL" id="M28210">
    <property type="protein sequence ID" value="AAA60242.1"/>
    <property type="molecule type" value="mRNA"/>
</dbReference>
<dbReference type="EMBL" id="AF157809">
    <property type="protein sequence ID" value="AAD46811.1"/>
    <property type="molecule type" value="Genomic_DNA"/>
</dbReference>
<dbReference type="EMBL" id="AF157806">
    <property type="protein sequence ID" value="AAD46811.1"/>
    <property type="status" value="JOINED"/>
    <property type="molecule type" value="Genomic_DNA"/>
</dbReference>
<dbReference type="EMBL" id="AF157807">
    <property type="protein sequence ID" value="AAD46811.1"/>
    <property type="status" value="JOINED"/>
    <property type="molecule type" value="Genomic_DNA"/>
</dbReference>
<dbReference type="EMBL" id="AF157808">
    <property type="protein sequence ID" value="AAD46811.1"/>
    <property type="status" value="JOINED"/>
    <property type="molecule type" value="Genomic_DNA"/>
</dbReference>
<dbReference type="EMBL" id="AF254795">
    <property type="protein sequence ID" value="AAF67748.1"/>
    <property type="molecule type" value="mRNA"/>
</dbReference>
<dbReference type="EMBL" id="AF498931">
    <property type="protein sequence ID" value="AAM21079.1"/>
    <property type="molecule type" value="mRNA"/>
</dbReference>
<dbReference type="EMBL" id="AK289559">
    <property type="protein sequence ID" value="BAF82248.1"/>
    <property type="molecule type" value="mRNA"/>
</dbReference>
<dbReference type="EMBL" id="AC068499">
    <property type="protein sequence ID" value="AAF67385.1"/>
    <property type="molecule type" value="Genomic_DNA"/>
</dbReference>
<dbReference type="EMBL" id="CH471106">
    <property type="protein sequence ID" value="EAW84672.1"/>
    <property type="molecule type" value="Genomic_DNA"/>
</dbReference>
<dbReference type="EMBL" id="BC011782">
    <property type="protein sequence ID" value="AAH11782.1"/>
    <property type="molecule type" value="mRNA"/>
</dbReference>
<dbReference type="CCDS" id="CCDS12372.1"/>
<dbReference type="PIR" id="C34323">
    <property type="entry name" value="C34323"/>
</dbReference>
<dbReference type="RefSeq" id="NP_002857.1">
    <property type="nucleotide sequence ID" value="NM_002866.5"/>
</dbReference>
<dbReference type="RefSeq" id="XP_011526466.1">
    <property type="nucleotide sequence ID" value="XM_011528164.1"/>
</dbReference>
<dbReference type="SMR" id="P20336"/>
<dbReference type="BioGRID" id="111802">
    <property type="interactions" value="73"/>
</dbReference>
<dbReference type="CORUM" id="P20336"/>
<dbReference type="FunCoup" id="P20336">
    <property type="interactions" value="815"/>
</dbReference>
<dbReference type="IntAct" id="P20336">
    <property type="interactions" value="54"/>
</dbReference>
<dbReference type="MINT" id="P20336"/>
<dbReference type="STRING" id="9606.ENSP00000222256"/>
<dbReference type="GlyGen" id="P20336">
    <property type="glycosylation" value="1 site, 1 O-linked glycan (1 site)"/>
</dbReference>
<dbReference type="iPTMnet" id="P20336"/>
<dbReference type="PhosphoSitePlus" id="P20336"/>
<dbReference type="SwissPalm" id="P20336"/>
<dbReference type="BioMuta" id="RAB3A"/>
<dbReference type="DMDM" id="131801"/>
<dbReference type="jPOST" id="P20336"/>
<dbReference type="MassIVE" id="P20336"/>
<dbReference type="PaxDb" id="9606-ENSP00000222256"/>
<dbReference type="PeptideAtlas" id="P20336"/>
<dbReference type="ProteomicsDB" id="53748"/>
<dbReference type="Pumba" id="P20336"/>
<dbReference type="Antibodypedia" id="1005">
    <property type="antibodies" value="390 antibodies from 39 providers"/>
</dbReference>
<dbReference type="DNASU" id="5864"/>
<dbReference type="Ensembl" id="ENST00000222256.9">
    <property type="protein sequence ID" value="ENSP00000222256.3"/>
    <property type="gene ID" value="ENSG00000105649.10"/>
</dbReference>
<dbReference type="GeneID" id="5864"/>
<dbReference type="KEGG" id="hsa:5864"/>
<dbReference type="MANE-Select" id="ENST00000222256.9">
    <property type="protein sequence ID" value="ENSP00000222256.3"/>
    <property type="RefSeq nucleotide sequence ID" value="NM_002866.5"/>
    <property type="RefSeq protein sequence ID" value="NP_002857.1"/>
</dbReference>
<dbReference type="UCSC" id="uc002nie.3">
    <property type="organism name" value="human"/>
</dbReference>
<dbReference type="AGR" id="HGNC:9777"/>
<dbReference type="CTD" id="5864"/>
<dbReference type="DisGeNET" id="5864"/>
<dbReference type="GeneCards" id="RAB3A"/>
<dbReference type="HGNC" id="HGNC:9777">
    <property type="gene designation" value="RAB3A"/>
</dbReference>
<dbReference type="HPA" id="ENSG00000105649">
    <property type="expression patterns" value="Tissue enriched (brain)"/>
</dbReference>
<dbReference type="MIM" id="179490">
    <property type="type" value="gene"/>
</dbReference>
<dbReference type="neXtProt" id="NX_P20336"/>
<dbReference type="OpenTargets" id="ENSG00000105649"/>
<dbReference type="PharmGKB" id="PA34132"/>
<dbReference type="VEuPathDB" id="HostDB:ENSG00000105649"/>
<dbReference type="eggNOG" id="KOG0093">
    <property type="taxonomic scope" value="Eukaryota"/>
</dbReference>
<dbReference type="GeneTree" id="ENSGT00940000158959"/>
<dbReference type="HOGENOM" id="CLU_041217_10_1_1"/>
<dbReference type="InParanoid" id="P20336"/>
<dbReference type="OMA" id="CSMARDI"/>
<dbReference type="OrthoDB" id="9989112at2759"/>
<dbReference type="PAN-GO" id="P20336">
    <property type="GO annotations" value="16 GO annotations based on evolutionary models"/>
</dbReference>
<dbReference type="PhylomeDB" id="P20336"/>
<dbReference type="TreeFam" id="TF313199"/>
<dbReference type="PathwayCommons" id="P20336"/>
<dbReference type="Reactome" id="R-HSA-181429">
    <property type="pathway name" value="Serotonin Neurotransmitter Release Cycle"/>
</dbReference>
<dbReference type="Reactome" id="R-HSA-181430">
    <property type="pathway name" value="Norepinephrine Neurotransmitter Release Cycle"/>
</dbReference>
<dbReference type="Reactome" id="R-HSA-210500">
    <property type="pathway name" value="Glutamate Neurotransmitter Release Cycle"/>
</dbReference>
<dbReference type="Reactome" id="R-HSA-212676">
    <property type="pathway name" value="Dopamine Neurotransmitter Release Cycle"/>
</dbReference>
<dbReference type="Reactome" id="R-HSA-264642">
    <property type="pathway name" value="Acetylcholine Neurotransmitter Release Cycle"/>
</dbReference>
<dbReference type="Reactome" id="R-HSA-6798695">
    <property type="pathway name" value="Neutrophil degranulation"/>
</dbReference>
<dbReference type="Reactome" id="R-HSA-8873719">
    <property type="pathway name" value="RAB geranylgeranylation"/>
</dbReference>
<dbReference type="Reactome" id="R-HSA-8876198">
    <property type="pathway name" value="RAB GEFs exchange GTP for GDP on RABs"/>
</dbReference>
<dbReference type="Reactome" id="R-HSA-888590">
    <property type="pathway name" value="GABA synthesis, release, reuptake and degradation"/>
</dbReference>
<dbReference type="Reactome" id="R-HSA-9662360">
    <property type="pathway name" value="Sensory processing of sound by inner hair cells of the cochlea"/>
</dbReference>
<dbReference type="SignaLink" id="P20336"/>
<dbReference type="SIGNOR" id="P20336"/>
<dbReference type="BioGRID-ORCS" id="5864">
    <property type="hits" value="16 hits in 1157 CRISPR screens"/>
</dbReference>
<dbReference type="CD-CODE" id="FB4E32DD">
    <property type="entry name" value="Presynaptic clusters and postsynaptic densities"/>
</dbReference>
<dbReference type="ChiTaRS" id="RAB3A">
    <property type="organism name" value="human"/>
</dbReference>
<dbReference type="GeneWiki" id="RAB3A"/>
<dbReference type="GenomeRNAi" id="5864"/>
<dbReference type="Pharos" id="P20336">
    <property type="development level" value="Tbio"/>
</dbReference>
<dbReference type="PRO" id="PR:P20336"/>
<dbReference type="Proteomes" id="UP000005640">
    <property type="component" value="Chromosome 19"/>
</dbReference>
<dbReference type="RNAct" id="P20336">
    <property type="molecule type" value="protein"/>
</dbReference>
<dbReference type="Bgee" id="ENSG00000105649">
    <property type="expression patterns" value="Expressed in right frontal lobe and 161 other cell types or tissues"/>
</dbReference>
<dbReference type="ExpressionAtlas" id="P20336">
    <property type="expression patterns" value="baseline and differential"/>
</dbReference>
<dbReference type="GO" id="GO:0001669">
    <property type="term" value="C:acrosomal vesicle"/>
    <property type="evidence" value="ECO:0007669"/>
    <property type="project" value="Ensembl"/>
</dbReference>
<dbReference type="GO" id="GO:0030424">
    <property type="term" value="C:axon"/>
    <property type="evidence" value="ECO:0000250"/>
    <property type="project" value="ParkinsonsUK-UCL"/>
</dbReference>
<dbReference type="GO" id="GO:0060201">
    <property type="term" value="C:clathrin-sculpted acetylcholine transport vesicle membrane"/>
    <property type="evidence" value="ECO:0000304"/>
    <property type="project" value="Reactome"/>
</dbReference>
<dbReference type="GO" id="GO:0061202">
    <property type="term" value="C:clathrin-sculpted gamma-aminobutyric acid transport vesicle membrane"/>
    <property type="evidence" value="ECO:0000304"/>
    <property type="project" value="Reactome"/>
</dbReference>
<dbReference type="GO" id="GO:0060203">
    <property type="term" value="C:clathrin-sculpted glutamate transport vesicle membrane"/>
    <property type="evidence" value="ECO:0000304"/>
    <property type="project" value="Reactome"/>
</dbReference>
<dbReference type="GO" id="GO:0070083">
    <property type="term" value="C:clathrin-sculpted monoamine transport vesicle membrane"/>
    <property type="evidence" value="ECO:0000304"/>
    <property type="project" value="Reactome"/>
</dbReference>
<dbReference type="GO" id="GO:0005829">
    <property type="term" value="C:cytosol"/>
    <property type="evidence" value="ECO:0000304"/>
    <property type="project" value="Reactome"/>
</dbReference>
<dbReference type="GO" id="GO:0005768">
    <property type="term" value="C:endosome"/>
    <property type="evidence" value="ECO:0000318"/>
    <property type="project" value="GO_Central"/>
</dbReference>
<dbReference type="GO" id="GO:1903561">
    <property type="term" value="C:extracellular vesicle"/>
    <property type="evidence" value="ECO:0007005"/>
    <property type="project" value="UniProtKB"/>
</dbReference>
<dbReference type="GO" id="GO:0005764">
    <property type="term" value="C:lysosome"/>
    <property type="evidence" value="ECO:0007669"/>
    <property type="project" value="UniProtKB-SubCell"/>
</dbReference>
<dbReference type="GO" id="GO:0048471">
    <property type="term" value="C:perinuclear region of cytoplasm"/>
    <property type="evidence" value="ECO:0000314"/>
    <property type="project" value="UniProtKB"/>
</dbReference>
<dbReference type="GO" id="GO:0005886">
    <property type="term" value="C:plasma membrane"/>
    <property type="evidence" value="ECO:0000318"/>
    <property type="project" value="GO_Central"/>
</dbReference>
<dbReference type="GO" id="GO:0098794">
    <property type="term" value="C:postsynapse"/>
    <property type="evidence" value="ECO:0000250"/>
    <property type="project" value="UniProtKB"/>
</dbReference>
<dbReference type="GO" id="GO:0098793">
    <property type="term" value="C:presynapse"/>
    <property type="evidence" value="ECO:0000250"/>
    <property type="project" value="UniProtKB"/>
</dbReference>
<dbReference type="GO" id="GO:0048786">
    <property type="term" value="C:presynaptic active zone"/>
    <property type="evidence" value="ECO:0000250"/>
    <property type="project" value="UniProtKB"/>
</dbReference>
<dbReference type="GO" id="GO:0030667">
    <property type="term" value="C:secretory granule membrane"/>
    <property type="evidence" value="ECO:0000304"/>
    <property type="project" value="Reactome"/>
</dbReference>
<dbReference type="GO" id="GO:0008021">
    <property type="term" value="C:synaptic vesicle"/>
    <property type="evidence" value="ECO:0000250"/>
    <property type="project" value="ParkinsonsUK-UCL"/>
</dbReference>
<dbReference type="GO" id="GO:0030672">
    <property type="term" value="C:synaptic vesicle membrane"/>
    <property type="evidence" value="ECO:0000318"/>
    <property type="project" value="GO_Central"/>
</dbReference>
<dbReference type="GO" id="GO:0043195">
    <property type="term" value="C:terminal bouton"/>
    <property type="evidence" value="ECO:0000250"/>
    <property type="project" value="ParkinsonsUK-UCL"/>
</dbReference>
<dbReference type="GO" id="GO:0005525">
    <property type="term" value="F:GTP binding"/>
    <property type="evidence" value="ECO:0007669"/>
    <property type="project" value="UniProtKB-KW"/>
</dbReference>
<dbReference type="GO" id="GO:0030742">
    <property type="term" value="F:GTP-dependent protein binding"/>
    <property type="evidence" value="ECO:0007669"/>
    <property type="project" value="Ensembl"/>
</dbReference>
<dbReference type="GO" id="GO:0003924">
    <property type="term" value="F:GTPase activity"/>
    <property type="evidence" value="ECO:0000314"/>
    <property type="project" value="UniProtKB"/>
</dbReference>
<dbReference type="GO" id="GO:0031489">
    <property type="term" value="F:myosin V binding"/>
    <property type="evidence" value="ECO:0000353"/>
    <property type="project" value="UniProtKB"/>
</dbReference>
<dbReference type="GO" id="GO:0030674">
    <property type="term" value="F:protein-macromolecule adaptor activity"/>
    <property type="evidence" value="ECO:0007669"/>
    <property type="project" value="Ensembl"/>
</dbReference>
<dbReference type="GO" id="GO:0060478">
    <property type="term" value="P:acrosomal vesicle exocytosis"/>
    <property type="evidence" value="ECO:0000314"/>
    <property type="project" value="UniProtKB"/>
</dbReference>
<dbReference type="GO" id="GO:0007409">
    <property type="term" value="P:axonogenesis"/>
    <property type="evidence" value="ECO:0000318"/>
    <property type="project" value="GO_Central"/>
</dbReference>
<dbReference type="GO" id="GO:0045054">
    <property type="term" value="P:constitutive secretory pathway"/>
    <property type="evidence" value="ECO:0000304"/>
    <property type="project" value="ParkinsonsUK-UCL"/>
</dbReference>
<dbReference type="GO" id="GO:0061670">
    <property type="term" value="P:evoked neurotransmitter secretion"/>
    <property type="evidence" value="ECO:0007669"/>
    <property type="project" value="Ensembl"/>
</dbReference>
<dbReference type="GO" id="GO:0006887">
    <property type="term" value="P:exocytosis"/>
    <property type="evidence" value="ECO:0000314"/>
    <property type="project" value="UniProtKB"/>
</dbReference>
<dbReference type="GO" id="GO:0030073">
    <property type="term" value="P:insulin secretion"/>
    <property type="evidence" value="ECO:0007669"/>
    <property type="project" value="Ensembl"/>
</dbReference>
<dbReference type="GO" id="GO:0030324">
    <property type="term" value="P:lung development"/>
    <property type="evidence" value="ECO:0007669"/>
    <property type="project" value="Ensembl"/>
</dbReference>
<dbReference type="GO" id="GO:0032418">
    <property type="term" value="P:lysosome localization"/>
    <property type="evidence" value="ECO:0000315"/>
    <property type="project" value="UniProtKB"/>
</dbReference>
<dbReference type="GO" id="GO:0048790">
    <property type="term" value="P:maintenance of presynaptic active zone structure"/>
    <property type="evidence" value="ECO:0007669"/>
    <property type="project" value="Ensembl"/>
</dbReference>
<dbReference type="GO" id="GO:0007005">
    <property type="term" value="P:mitochondrion organization"/>
    <property type="evidence" value="ECO:0007669"/>
    <property type="project" value="Ensembl"/>
</dbReference>
<dbReference type="GO" id="GO:0007274">
    <property type="term" value="P:neuromuscular synaptic transmission"/>
    <property type="evidence" value="ECO:0007669"/>
    <property type="project" value="Ensembl"/>
</dbReference>
<dbReference type="GO" id="GO:0001778">
    <property type="term" value="P:plasma membrane repair"/>
    <property type="evidence" value="ECO:0000314"/>
    <property type="project" value="UniProtKB"/>
</dbReference>
<dbReference type="GO" id="GO:0045921">
    <property type="term" value="P:positive regulation of exocytosis"/>
    <property type="evidence" value="ECO:0000304"/>
    <property type="project" value="ParkinsonsUK-UCL"/>
</dbReference>
<dbReference type="GO" id="GO:1903307">
    <property type="term" value="P:positive regulation of regulated secretory pathway"/>
    <property type="evidence" value="ECO:0000315"/>
    <property type="project" value="UniProtKB"/>
</dbReference>
<dbReference type="GO" id="GO:0009791">
    <property type="term" value="P:post-embryonic development"/>
    <property type="evidence" value="ECO:0007669"/>
    <property type="project" value="Ensembl"/>
</dbReference>
<dbReference type="GO" id="GO:0045055">
    <property type="term" value="P:regulated exocytosis"/>
    <property type="evidence" value="ECO:0000315"/>
    <property type="project" value="UniProtKB"/>
</dbReference>
<dbReference type="GO" id="GO:1905684">
    <property type="term" value="P:regulation of plasma membrane repair"/>
    <property type="evidence" value="ECO:0000315"/>
    <property type="project" value="UniProtKB"/>
</dbReference>
<dbReference type="GO" id="GO:0099161">
    <property type="term" value="P:regulation of presynaptic dense core granule exocytosis"/>
    <property type="evidence" value="ECO:0007669"/>
    <property type="project" value="Ensembl"/>
</dbReference>
<dbReference type="GO" id="GO:0048172">
    <property type="term" value="P:regulation of short-term neuronal synaptic plasticity"/>
    <property type="evidence" value="ECO:0000250"/>
    <property type="project" value="ParkinsonsUK-UCL"/>
</dbReference>
<dbReference type="GO" id="GO:0031630">
    <property type="term" value="P:regulation of synaptic vesicle fusion to presynaptic active zone membrane"/>
    <property type="evidence" value="ECO:0000250"/>
    <property type="project" value="ParkinsonsUK-UCL"/>
</dbReference>
<dbReference type="GO" id="GO:0003016">
    <property type="term" value="P:respiratory system process"/>
    <property type="evidence" value="ECO:0007669"/>
    <property type="project" value="Ensembl"/>
</dbReference>
<dbReference type="GO" id="GO:0051602">
    <property type="term" value="P:response to electrical stimulus"/>
    <property type="evidence" value="ECO:0007669"/>
    <property type="project" value="Ensembl"/>
</dbReference>
<dbReference type="GO" id="GO:0050975">
    <property type="term" value="P:sensory perception of touch"/>
    <property type="evidence" value="ECO:0007669"/>
    <property type="project" value="Ensembl"/>
</dbReference>
<dbReference type="GO" id="GO:0097091">
    <property type="term" value="P:synaptic vesicle clustering"/>
    <property type="evidence" value="ECO:0007669"/>
    <property type="project" value="Ensembl"/>
</dbReference>
<dbReference type="GO" id="GO:0016079">
    <property type="term" value="P:synaptic vesicle exocytosis"/>
    <property type="evidence" value="ECO:0000250"/>
    <property type="project" value="ParkinsonsUK-UCL"/>
</dbReference>
<dbReference type="GO" id="GO:0016188">
    <property type="term" value="P:synaptic vesicle maturation"/>
    <property type="evidence" value="ECO:0007669"/>
    <property type="project" value="Ensembl"/>
</dbReference>
<dbReference type="GO" id="GO:0036465">
    <property type="term" value="P:synaptic vesicle recycling"/>
    <property type="evidence" value="ECO:0000250"/>
    <property type="project" value="ParkinsonsUK-UCL"/>
</dbReference>
<dbReference type="GO" id="GO:0048489">
    <property type="term" value="P:synaptic vesicle transport"/>
    <property type="evidence" value="ECO:0007669"/>
    <property type="project" value="Ensembl"/>
</dbReference>
<dbReference type="CDD" id="cd01865">
    <property type="entry name" value="Rab3"/>
    <property type="match status" value="1"/>
</dbReference>
<dbReference type="FunFam" id="3.40.50.300:FF:000206">
    <property type="entry name" value="Ras-related protein Rab-3C"/>
    <property type="match status" value="1"/>
</dbReference>
<dbReference type="Gene3D" id="3.40.50.300">
    <property type="entry name" value="P-loop containing nucleotide triphosphate hydrolases"/>
    <property type="match status" value="1"/>
</dbReference>
<dbReference type="InterPro" id="IPR027417">
    <property type="entry name" value="P-loop_NTPase"/>
</dbReference>
<dbReference type="InterPro" id="IPR037872">
    <property type="entry name" value="Rab3"/>
</dbReference>
<dbReference type="InterPro" id="IPR005225">
    <property type="entry name" value="Small_GTP-bd"/>
</dbReference>
<dbReference type="InterPro" id="IPR001806">
    <property type="entry name" value="Small_GTPase"/>
</dbReference>
<dbReference type="InterPro" id="IPR050305">
    <property type="entry name" value="Small_GTPase_Rab"/>
</dbReference>
<dbReference type="NCBIfam" id="TIGR00231">
    <property type="entry name" value="small_GTP"/>
    <property type="match status" value="1"/>
</dbReference>
<dbReference type="PANTHER" id="PTHR47980">
    <property type="entry name" value="LD44762P"/>
    <property type="match status" value="1"/>
</dbReference>
<dbReference type="Pfam" id="PF00071">
    <property type="entry name" value="Ras"/>
    <property type="match status" value="1"/>
</dbReference>
<dbReference type="PRINTS" id="PR00449">
    <property type="entry name" value="RASTRNSFRMNG"/>
</dbReference>
<dbReference type="SMART" id="SM00175">
    <property type="entry name" value="RAB"/>
    <property type="match status" value="1"/>
</dbReference>
<dbReference type="SMART" id="SM00176">
    <property type="entry name" value="RAN"/>
    <property type="match status" value="1"/>
</dbReference>
<dbReference type="SMART" id="SM00173">
    <property type="entry name" value="RAS"/>
    <property type="match status" value="1"/>
</dbReference>
<dbReference type="SMART" id="SM00174">
    <property type="entry name" value="RHO"/>
    <property type="match status" value="1"/>
</dbReference>
<dbReference type="SUPFAM" id="SSF52540">
    <property type="entry name" value="P-loop containing nucleoside triphosphate hydrolases"/>
    <property type="match status" value="1"/>
</dbReference>
<dbReference type="PROSITE" id="PS51419">
    <property type="entry name" value="RAB"/>
    <property type="match status" value="1"/>
</dbReference>
<evidence type="ECO:0000250" key="1">
    <source>
        <dbReference type="UniProtKB" id="P63011"/>
    </source>
</evidence>
<evidence type="ECO:0000250" key="2">
    <source>
        <dbReference type="UniProtKB" id="P63012"/>
    </source>
</evidence>
<evidence type="ECO:0000256" key="3">
    <source>
        <dbReference type="SAM" id="MobiDB-lite"/>
    </source>
</evidence>
<evidence type="ECO:0000269" key="4">
    <source>
    </source>
</evidence>
<evidence type="ECO:0000269" key="5">
    <source>
    </source>
</evidence>
<evidence type="ECO:0000269" key="6">
    <source>
    </source>
</evidence>
<evidence type="ECO:0000269" key="7">
    <source>
    </source>
</evidence>
<evidence type="ECO:0000269" key="8">
    <source>
    </source>
</evidence>
<evidence type="ECO:0000269" key="9">
    <source>
    </source>
</evidence>
<evidence type="ECO:0000269" key="10">
    <source>
    </source>
</evidence>
<evidence type="ECO:0000269" key="11">
    <source>
    </source>
</evidence>
<evidence type="ECO:0000269" key="12">
    <source>
    </source>
</evidence>
<evidence type="ECO:0000269" key="13">
    <source>
    </source>
</evidence>
<evidence type="ECO:0000269" key="14">
    <source>
    </source>
</evidence>
<evidence type="ECO:0000269" key="15">
    <source>
    </source>
</evidence>
<evidence type="ECO:0000269" key="16">
    <source>
    </source>
</evidence>
<evidence type="ECO:0000305" key="17"/>
<evidence type="ECO:0000305" key="18">
    <source>
    </source>
</evidence>
<evidence type="ECO:0000312" key="19">
    <source>
        <dbReference type="HGNC" id="HGNC:9777"/>
    </source>
</evidence>
<reference key="1">
    <citation type="journal article" date="1989" name="J. Biol. Chem.">
        <title>The human Rab genes encode a family of GTP-binding proteins related to yeast YPT1 and SEC4 products involved in secretion.</title>
        <authorList>
            <person name="Zahraoui A."/>
            <person name="Touchot N."/>
            <person name="Chardin P."/>
            <person name="Tavitian A."/>
        </authorList>
    </citation>
    <scope>NUCLEOTIDE SEQUENCE [MRNA]</scope>
    <scope>FUNCTION</scope>
    <scope>CATALYTIC ACTIVITY</scope>
</reference>
<reference key="2">
    <citation type="journal article" date="1999" name="Cell. Signal.">
        <title>Genomic organisation of the human cyclic AMP-specific phosphodiesterase PDE4C gene and its chromosomal localisation to 19p13.1, between RAB3A and JUND.</title>
        <authorList>
            <person name="Sullivan M."/>
            <person name="Olsen A.S."/>
            <person name="Houslay M.D."/>
        </authorList>
    </citation>
    <scope>NUCLEOTIDE SEQUENCE [GENOMIC DNA]</scope>
</reference>
<reference key="3">
    <citation type="submission" date="2000-04" db="EMBL/GenBank/DDBJ databases">
        <title>Functional cloning and characterization of human fetal brain cDNAs.</title>
        <authorList>
            <person name="Liu Y."/>
            <person name="Li J."/>
            <person name="He J.J."/>
        </authorList>
    </citation>
    <scope>NUCLEOTIDE SEQUENCE [MRNA]</scope>
    <source>
        <tissue>Fetal brain</tissue>
    </source>
</reference>
<reference key="4">
    <citation type="submission" date="2002-04" db="EMBL/GenBank/DDBJ databases">
        <title>cDNA clones of human proteins involved in signal transduction sequenced by the Guthrie cDNA resource center (www.cdna.org).</title>
        <authorList>
            <person name="Puhl H.L. III"/>
            <person name="Ikeda S.R."/>
            <person name="Aronstam R.S."/>
        </authorList>
    </citation>
    <scope>NUCLEOTIDE SEQUENCE [LARGE SCALE MRNA]</scope>
    <source>
        <tissue>Brain</tissue>
    </source>
</reference>
<reference key="5">
    <citation type="journal article" date="2004" name="Nat. Genet.">
        <title>Complete sequencing and characterization of 21,243 full-length human cDNAs.</title>
        <authorList>
            <person name="Ota T."/>
            <person name="Suzuki Y."/>
            <person name="Nishikawa T."/>
            <person name="Otsuki T."/>
            <person name="Sugiyama T."/>
            <person name="Irie R."/>
            <person name="Wakamatsu A."/>
            <person name="Hayashi K."/>
            <person name="Sato H."/>
            <person name="Nagai K."/>
            <person name="Kimura K."/>
            <person name="Makita H."/>
            <person name="Sekine M."/>
            <person name="Obayashi M."/>
            <person name="Nishi T."/>
            <person name="Shibahara T."/>
            <person name="Tanaka T."/>
            <person name="Ishii S."/>
            <person name="Yamamoto J."/>
            <person name="Saito K."/>
            <person name="Kawai Y."/>
            <person name="Isono Y."/>
            <person name="Nakamura Y."/>
            <person name="Nagahari K."/>
            <person name="Murakami K."/>
            <person name="Yasuda T."/>
            <person name="Iwayanagi T."/>
            <person name="Wagatsuma M."/>
            <person name="Shiratori A."/>
            <person name="Sudo H."/>
            <person name="Hosoiri T."/>
            <person name="Kaku Y."/>
            <person name="Kodaira H."/>
            <person name="Kondo H."/>
            <person name="Sugawara M."/>
            <person name="Takahashi M."/>
            <person name="Kanda K."/>
            <person name="Yokoi T."/>
            <person name="Furuya T."/>
            <person name="Kikkawa E."/>
            <person name="Omura Y."/>
            <person name="Abe K."/>
            <person name="Kamihara K."/>
            <person name="Katsuta N."/>
            <person name="Sato K."/>
            <person name="Tanikawa M."/>
            <person name="Yamazaki M."/>
            <person name="Ninomiya K."/>
            <person name="Ishibashi T."/>
            <person name="Yamashita H."/>
            <person name="Murakawa K."/>
            <person name="Fujimori K."/>
            <person name="Tanai H."/>
            <person name="Kimata M."/>
            <person name="Watanabe M."/>
            <person name="Hiraoka S."/>
            <person name="Chiba Y."/>
            <person name="Ishida S."/>
            <person name="Ono Y."/>
            <person name="Takiguchi S."/>
            <person name="Watanabe S."/>
            <person name="Yosida M."/>
            <person name="Hotuta T."/>
            <person name="Kusano J."/>
            <person name="Kanehori K."/>
            <person name="Takahashi-Fujii A."/>
            <person name="Hara H."/>
            <person name="Tanase T.-O."/>
            <person name="Nomura Y."/>
            <person name="Togiya S."/>
            <person name="Komai F."/>
            <person name="Hara R."/>
            <person name="Takeuchi K."/>
            <person name="Arita M."/>
            <person name="Imose N."/>
            <person name="Musashino K."/>
            <person name="Yuuki H."/>
            <person name="Oshima A."/>
            <person name="Sasaki N."/>
            <person name="Aotsuka S."/>
            <person name="Yoshikawa Y."/>
            <person name="Matsunawa H."/>
            <person name="Ichihara T."/>
            <person name="Shiohata N."/>
            <person name="Sano S."/>
            <person name="Moriya S."/>
            <person name="Momiyama H."/>
            <person name="Satoh N."/>
            <person name="Takami S."/>
            <person name="Terashima Y."/>
            <person name="Suzuki O."/>
            <person name="Nakagawa S."/>
            <person name="Senoh A."/>
            <person name="Mizoguchi H."/>
            <person name="Goto Y."/>
            <person name="Shimizu F."/>
            <person name="Wakebe H."/>
            <person name="Hishigaki H."/>
            <person name="Watanabe T."/>
            <person name="Sugiyama A."/>
            <person name="Takemoto M."/>
            <person name="Kawakami B."/>
            <person name="Yamazaki M."/>
            <person name="Watanabe K."/>
            <person name="Kumagai A."/>
            <person name="Itakura S."/>
            <person name="Fukuzumi Y."/>
            <person name="Fujimori Y."/>
            <person name="Komiyama M."/>
            <person name="Tashiro H."/>
            <person name="Tanigami A."/>
            <person name="Fujiwara T."/>
            <person name="Ono T."/>
            <person name="Yamada K."/>
            <person name="Fujii Y."/>
            <person name="Ozaki K."/>
            <person name="Hirao M."/>
            <person name="Ohmori Y."/>
            <person name="Kawabata A."/>
            <person name="Hikiji T."/>
            <person name="Kobatake N."/>
            <person name="Inagaki H."/>
            <person name="Ikema Y."/>
            <person name="Okamoto S."/>
            <person name="Okitani R."/>
            <person name="Kawakami T."/>
            <person name="Noguchi S."/>
            <person name="Itoh T."/>
            <person name="Shigeta K."/>
            <person name="Senba T."/>
            <person name="Matsumura K."/>
            <person name="Nakajima Y."/>
            <person name="Mizuno T."/>
            <person name="Morinaga M."/>
            <person name="Sasaki M."/>
            <person name="Togashi T."/>
            <person name="Oyama M."/>
            <person name="Hata H."/>
            <person name="Watanabe M."/>
            <person name="Komatsu T."/>
            <person name="Mizushima-Sugano J."/>
            <person name="Satoh T."/>
            <person name="Shirai Y."/>
            <person name="Takahashi Y."/>
            <person name="Nakagawa K."/>
            <person name="Okumura K."/>
            <person name="Nagase T."/>
            <person name="Nomura N."/>
            <person name="Kikuchi H."/>
            <person name="Masuho Y."/>
            <person name="Yamashita R."/>
            <person name="Nakai K."/>
            <person name="Yada T."/>
            <person name="Nakamura Y."/>
            <person name="Ohara O."/>
            <person name="Isogai T."/>
            <person name="Sugano S."/>
        </authorList>
    </citation>
    <scope>NUCLEOTIDE SEQUENCE [LARGE SCALE MRNA]</scope>
    <source>
        <tissue>Cerebellum</tissue>
    </source>
</reference>
<reference key="6">
    <citation type="journal article" date="2004" name="Nature">
        <title>The DNA sequence and biology of human chromosome 19.</title>
        <authorList>
            <person name="Grimwood J."/>
            <person name="Gordon L.A."/>
            <person name="Olsen A.S."/>
            <person name="Terry A."/>
            <person name="Schmutz J."/>
            <person name="Lamerdin J.E."/>
            <person name="Hellsten U."/>
            <person name="Goodstein D."/>
            <person name="Couronne O."/>
            <person name="Tran-Gyamfi M."/>
            <person name="Aerts A."/>
            <person name="Altherr M."/>
            <person name="Ashworth L."/>
            <person name="Bajorek E."/>
            <person name="Black S."/>
            <person name="Branscomb E."/>
            <person name="Caenepeel S."/>
            <person name="Carrano A.V."/>
            <person name="Caoile C."/>
            <person name="Chan Y.M."/>
            <person name="Christensen M."/>
            <person name="Cleland C.A."/>
            <person name="Copeland A."/>
            <person name="Dalin E."/>
            <person name="Dehal P."/>
            <person name="Denys M."/>
            <person name="Detter J.C."/>
            <person name="Escobar J."/>
            <person name="Flowers D."/>
            <person name="Fotopulos D."/>
            <person name="Garcia C."/>
            <person name="Georgescu A.M."/>
            <person name="Glavina T."/>
            <person name="Gomez M."/>
            <person name="Gonzales E."/>
            <person name="Groza M."/>
            <person name="Hammon N."/>
            <person name="Hawkins T."/>
            <person name="Haydu L."/>
            <person name="Ho I."/>
            <person name="Huang W."/>
            <person name="Israni S."/>
            <person name="Jett J."/>
            <person name="Kadner K."/>
            <person name="Kimball H."/>
            <person name="Kobayashi A."/>
            <person name="Larionov V."/>
            <person name="Leem S.-H."/>
            <person name="Lopez F."/>
            <person name="Lou Y."/>
            <person name="Lowry S."/>
            <person name="Malfatti S."/>
            <person name="Martinez D."/>
            <person name="McCready P.M."/>
            <person name="Medina C."/>
            <person name="Morgan J."/>
            <person name="Nelson K."/>
            <person name="Nolan M."/>
            <person name="Ovcharenko I."/>
            <person name="Pitluck S."/>
            <person name="Pollard M."/>
            <person name="Popkie A.P."/>
            <person name="Predki P."/>
            <person name="Quan G."/>
            <person name="Ramirez L."/>
            <person name="Rash S."/>
            <person name="Retterer J."/>
            <person name="Rodriguez A."/>
            <person name="Rogers S."/>
            <person name="Salamov A."/>
            <person name="Salazar A."/>
            <person name="She X."/>
            <person name="Smith D."/>
            <person name="Slezak T."/>
            <person name="Solovyev V."/>
            <person name="Thayer N."/>
            <person name="Tice H."/>
            <person name="Tsai M."/>
            <person name="Ustaszewska A."/>
            <person name="Vo N."/>
            <person name="Wagner M."/>
            <person name="Wheeler J."/>
            <person name="Wu K."/>
            <person name="Xie G."/>
            <person name="Yang J."/>
            <person name="Dubchak I."/>
            <person name="Furey T.S."/>
            <person name="DeJong P."/>
            <person name="Dickson M."/>
            <person name="Gordon D."/>
            <person name="Eichler E.E."/>
            <person name="Pennacchio L.A."/>
            <person name="Richardson P."/>
            <person name="Stubbs L."/>
            <person name="Rokhsar D.S."/>
            <person name="Myers R.M."/>
            <person name="Rubin E.M."/>
            <person name="Lucas S.M."/>
        </authorList>
    </citation>
    <scope>NUCLEOTIDE SEQUENCE [LARGE SCALE GENOMIC DNA]</scope>
</reference>
<reference key="7">
    <citation type="submission" date="2005-07" db="EMBL/GenBank/DDBJ databases">
        <authorList>
            <person name="Mural R.J."/>
            <person name="Istrail S."/>
            <person name="Sutton G.G."/>
            <person name="Florea L."/>
            <person name="Halpern A.L."/>
            <person name="Mobarry C.M."/>
            <person name="Lippert R."/>
            <person name="Walenz B."/>
            <person name="Shatkay H."/>
            <person name="Dew I."/>
            <person name="Miller J.R."/>
            <person name="Flanigan M.J."/>
            <person name="Edwards N.J."/>
            <person name="Bolanos R."/>
            <person name="Fasulo D."/>
            <person name="Halldorsson B.V."/>
            <person name="Hannenhalli S."/>
            <person name="Turner R."/>
            <person name="Yooseph S."/>
            <person name="Lu F."/>
            <person name="Nusskern D.R."/>
            <person name="Shue B.C."/>
            <person name="Zheng X.H."/>
            <person name="Zhong F."/>
            <person name="Delcher A.L."/>
            <person name="Huson D.H."/>
            <person name="Kravitz S.A."/>
            <person name="Mouchard L."/>
            <person name="Reinert K."/>
            <person name="Remington K.A."/>
            <person name="Clark A.G."/>
            <person name="Waterman M.S."/>
            <person name="Eichler E.E."/>
            <person name="Adams M.D."/>
            <person name="Hunkapiller M.W."/>
            <person name="Myers E.W."/>
            <person name="Venter J.C."/>
        </authorList>
    </citation>
    <scope>NUCLEOTIDE SEQUENCE [LARGE SCALE GENOMIC DNA]</scope>
</reference>
<reference key="8">
    <citation type="journal article" date="2004" name="Genome Res.">
        <title>The status, quality, and expansion of the NIH full-length cDNA project: the Mammalian Gene Collection (MGC).</title>
        <authorList>
            <consortium name="The MGC Project Team"/>
        </authorList>
    </citation>
    <scope>NUCLEOTIDE SEQUENCE [LARGE SCALE MRNA]</scope>
    <source>
        <tissue>Lung</tissue>
    </source>
</reference>
<reference key="9">
    <citation type="journal article" date="1991" name="Proc. Natl. Acad. Sci. U.S.A.">
        <title>Isoprenoid modification of rab proteins terminating in CC or CXC motifs.</title>
        <authorList>
            <person name="Khosravi-Far R."/>
            <person name="Lutz R.J."/>
            <person name="Cox A.D."/>
            <person name="Conroy L."/>
            <person name="Bourne J.R."/>
            <person name="Sinensky M."/>
            <person name="Balch W.E."/>
            <person name="Buss J.E."/>
            <person name="Der C.J."/>
        </authorList>
    </citation>
    <scope>ISOPRENYLATION AT CYS-218 AND CYS-220</scope>
    <scope>METHYLATION AT CYS-220</scope>
</reference>
<reference key="10">
    <citation type="journal article" date="1994" name="Proc. Natl. Acad. Sci. U.S.A.">
        <title>Rab geranylgeranyl transferase catalyzes the geranylgeranylation of adjacent cysteines in the small GTPases Rab1A, Rab3A, and Rab5A.</title>
        <authorList>
            <person name="Farnsworth C.C."/>
            <person name="Seabra M.C."/>
            <person name="Ericsson L.H."/>
            <person name="Gelb M.H."/>
            <person name="Glomset J.A."/>
        </authorList>
    </citation>
    <scope>ISOPRENYLATION AT CYS-218 AND CYS-220</scope>
    <scope>IDENTIFICATION BY MASS SPECTROMETRY</scope>
</reference>
<reference key="11">
    <citation type="journal article" date="2000" name="J. Biol. Chem.">
        <title>Biochemical characterization of Rab3-GTPase-activating protein reveals a mechanism similar to that of Ras-GAP.</title>
        <authorList>
            <person name="Clabecq A."/>
            <person name="Henry J.-P."/>
            <person name="Darchen F."/>
        </authorList>
    </citation>
    <scope>ACTIVITY REGULATION</scope>
</reference>
<reference key="12">
    <citation type="journal article" date="2004" name="Neurobiol. Dis.">
        <title>Abnormal alpha-synuclein interactions with rab3a and rabphilin in diffuse Lewy body disease.</title>
        <authorList>
            <person name="Dalfo E."/>
            <person name="Barrachina M."/>
            <person name="Rosa J.L."/>
            <person name="Ambrosio S."/>
            <person name="Ferrer I."/>
        </authorList>
    </citation>
    <scope>INTERACTION WITH RPH3A AND SNCA</scope>
</reference>
<reference key="13">
    <citation type="journal article" date="2009" name="Genes Cells">
        <title>Identification and characterization of a novel Tre-2/Bub2/Cdc16 (TBC) protein that possesses Rab3A-GAP activity.</title>
        <authorList>
            <person name="Ishibashi K."/>
            <person name="Kanno E."/>
            <person name="Itoh T."/>
            <person name="Fukuda M."/>
        </authorList>
    </citation>
    <scope>ACTIVITY REGULATION</scope>
</reference>
<reference key="14">
    <citation type="journal article" date="2010" name="J. Cell Biol.">
        <title>Family-wide characterization of the DENN domain Rab GDP-GTP exchange factors.</title>
        <authorList>
            <person name="Yoshimura S."/>
            <person name="Gerondopoulos A."/>
            <person name="Linford A."/>
            <person name="Rigden D.J."/>
            <person name="Barr F.A."/>
        </authorList>
    </citation>
    <scope>ACTIVITY REGULATION</scope>
</reference>
<reference key="15">
    <citation type="journal article" date="2012" name="Exp. Cell Res.">
        <title>RIM, Munc13, and Rab3A interplay in acrosomal exocytosis.</title>
        <authorList>
            <person name="Bello O.D."/>
            <person name="Zanetti M.N."/>
            <person name="Mayorga L.S."/>
            <person name="Michaut M.A."/>
        </authorList>
    </citation>
    <scope>FUNCTION</scope>
</reference>
<reference key="16">
    <citation type="journal article" date="2016" name="Elife">
        <title>Phosphoproteomics reveals that Parkinson's disease kinase LRRK2 regulates a subset of Rab GTPases.</title>
        <authorList>
            <person name="Steger M."/>
            <person name="Tonelli F."/>
            <person name="Ito G."/>
            <person name="Davies P."/>
            <person name="Trost M."/>
            <person name="Vetter M."/>
            <person name="Wachter S."/>
            <person name="Lorentzen E."/>
            <person name="Duddy G."/>
            <person name="Wilson S."/>
            <person name="Baptista M.A."/>
            <person name="Fiske B.K."/>
            <person name="Fell M.J."/>
            <person name="Morrow J.A."/>
            <person name="Reith A.D."/>
            <person name="Alessi D.R."/>
            <person name="Mann M."/>
        </authorList>
    </citation>
    <scope>PHOSPHORYLATION AT THR-86</scope>
</reference>
<reference key="17">
    <citation type="journal article" date="2016" name="J. Cell Biol.">
        <title>A Rab3a-dependent complex essential for lysosome positioning and plasma membrane repair.</title>
        <authorList>
            <person name="Encarnacao M."/>
            <person name="Espada L."/>
            <person name="Escrevente C."/>
            <person name="Mateus D."/>
            <person name="Ramalho J."/>
            <person name="Michelet X."/>
            <person name="Santarino I."/>
            <person name="Hsu V.W."/>
            <person name="Brenner M.B."/>
            <person name="Barral D.C."/>
            <person name="Vieira O.V."/>
        </authorList>
    </citation>
    <scope>FUNCTION</scope>
    <scope>SUBCELLULAR LOCATION</scope>
    <scope>INTERACTION WITH MYH9</scope>
</reference>
<reference key="18">
    <citation type="journal article" date="2017" name="Elife">
        <title>Systematic proteomic analysis of LRRK2-mediated Rab GTPase phosphorylation establishes a connection to ciliogenesis.</title>
        <authorList>
            <person name="Steger M."/>
            <person name="Diez F."/>
            <person name="Dhekne H.S."/>
            <person name="Lis P."/>
            <person name="Nirujogi R.S."/>
            <person name="Karayel O."/>
            <person name="Tonelli F."/>
            <person name="Martinez T.N."/>
            <person name="Lorentzen E."/>
            <person name="Pfeffer S.R."/>
            <person name="Alessi D.R."/>
            <person name="Mann M."/>
        </authorList>
    </citation>
    <scope>INTERACTION WITH GDI1; GDI2; CHML AND CHM</scope>
    <scope>PHOSPHORYLATION AT THR-86</scope>
    <scope>MUTAGENESIS OF THR-86</scope>
</reference>
<reference key="19">
    <citation type="journal article" date="2018" name="Biochim. Biophys. Acta">
        <title>Grab recruitment by Rab27A-Rabphilin3a triggers Rab3A activation in human sperm exocytosis.</title>
        <authorList>
            <person name="Quevedo M.F."/>
            <person name="Bustos M.A."/>
            <person name="Masone D."/>
            <person name="Roggero C.M."/>
            <person name="Bustos D.M."/>
            <person name="Tomes C.N."/>
        </authorList>
    </citation>
    <scope>FUNCTION</scope>
</reference>
<reference key="20">
    <citation type="journal article" date="2022" name="Nat. Commun.">
        <title>Rep15 interacts with several Rab GTPases and has a distinct fold for a Rab effector.</title>
        <authorList>
            <person name="Rai A."/>
            <person name="Singh A.K."/>
            <person name="Bleimling N."/>
            <person name="Posern G."/>
            <person name="Vetter I.R."/>
            <person name="Goody R.S."/>
        </authorList>
    </citation>
    <scope>INTERACTION WITH REP15</scope>
    <scope>MUTAGENESIS OF VAL-61 AND TYR-84</scope>
</reference>
<gene>
    <name evidence="19" type="primary">RAB3A</name>
</gene>
<proteinExistence type="evidence at protein level"/>